<sequence>MADPIFFKPSRELTIGDVADFTGASLRDPKLAPRSVERLASLKDAGEGALVFVEGKKNVSSLVGLKAAGVLCTESLADSVPSGIAVLVSRHPHRDFSAVGRMLFPASVRPESWLGETGISPAAFIHPTAQIEDGATVEAGAVIGSGVTIGAGTLIAATAVIGQNCQIGRNSYIAPGVSVQCAFIGNNVSLHPGVRIGQDGFGYVPGAAGLDKVPQLGRVIIQDNVEIGANTTVDRGSLDDTVIGEGTKIDNLVQIAHNVRIGRFCLVAAHCGISGSCVIGDQTMLGGRVGLADHLIIGSRVQVAAASGVMNDIPDGERWGGIPARPIKQWFRDIANIRSIGQSRKDASSDE</sequence>
<gene>
    <name evidence="1" type="primary">lpxD</name>
    <name type="ordered locus">BSUIS_A1201</name>
</gene>
<proteinExistence type="inferred from homology"/>
<keyword id="KW-0012">Acyltransferase</keyword>
<keyword id="KW-0441">Lipid A biosynthesis</keyword>
<keyword id="KW-0444">Lipid biosynthesis</keyword>
<keyword id="KW-0443">Lipid metabolism</keyword>
<keyword id="KW-0677">Repeat</keyword>
<keyword id="KW-0808">Transferase</keyword>
<dbReference type="EC" id="2.3.1.191" evidence="1"/>
<dbReference type="EMBL" id="CP000911">
    <property type="protein sequence ID" value="ABY38252.1"/>
    <property type="molecule type" value="Genomic_DNA"/>
</dbReference>
<dbReference type="RefSeq" id="WP_002964281.1">
    <property type="nucleotide sequence ID" value="NC_010169.1"/>
</dbReference>
<dbReference type="SMR" id="B0CGV1"/>
<dbReference type="GeneID" id="97533596"/>
<dbReference type="KEGG" id="bmt:BSUIS_A1201"/>
<dbReference type="HOGENOM" id="CLU_049865_0_2_5"/>
<dbReference type="UniPathway" id="UPA00973"/>
<dbReference type="Proteomes" id="UP000008545">
    <property type="component" value="Chromosome I"/>
</dbReference>
<dbReference type="GO" id="GO:0016020">
    <property type="term" value="C:membrane"/>
    <property type="evidence" value="ECO:0007669"/>
    <property type="project" value="GOC"/>
</dbReference>
<dbReference type="GO" id="GO:0016410">
    <property type="term" value="F:N-acyltransferase activity"/>
    <property type="evidence" value="ECO:0007669"/>
    <property type="project" value="InterPro"/>
</dbReference>
<dbReference type="GO" id="GO:0009245">
    <property type="term" value="P:lipid A biosynthetic process"/>
    <property type="evidence" value="ECO:0007669"/>
    <property type="project" value="UniProtKB-UniRule"/>
</dbReference>
<dbReference type="CDD" id="cd03352">
    <property type="entry name" value="LbH_LpxD"/>
    <property type="match status" value="1"/>
</dbReference>
<dbReference type="Gene3D" id="2.160.10.10">
    <property type="entry name" value="Hexapeptide repeat proteins"/>
    <property type="match status" value="1"/>
</dbReference>
<dbReference type="Gene3D" id="3.40.1390.10">
    <property type="entry name" value="MurE/MurF, N-terminal domain"/>
    <property type="match status" value="1"/>
</dbReference>
<dbReference type="HAMAP" id="MF_00523">
    <property type="entry name" value="LpxD"/>
    <property type="match status" value="1"/>
</dbReference>
<dbReference type="InterPro" id="IPR001451">
    <property type="entry name" value="Hexapep"/>
</dbReference>
<dbReference type="InterPro" id="IPR018357">
    <property type="entry name" value="Hexapep_transf_CS"/>
</dbReference>
<dbReference type="InterPro" id="IPR007691">
    <property type="entry name" value="LpxD"/>
</dbReference>
<dbReference type="InterPro" id="IPR011004">
    <property type="entry name" value="Trimer_LpxA-like_sf"/>
</dbReference>
<dbReference type="InterPro" id="IPR020573">
    <property type="entry name" value="UDP_GlcNAc_AcTrfase_non-rep"/>
</dbReference>
<dbReference type="NCBIfam" id="TIGR01853">
    <property type="entry name" value="lipid_A_lpxD"/>
    <property type="match status" value="1"/>
</dbReference>
<dbReference type="NCBIfam" id="NF002060">
    <property type="entry name" value="PRK00892.1"/>
    <property type="match status" value="1"/>
</dbReference>
<dbReference type="PANTHER" id="PTHR43378">
    <property type="entry name" value="UDP-3-O-ACYLGLUCOSAMINE N-ACYLTRANSFERASE"/>
    <property type="match status" value="1"/>
</dbReference>
<dbReference type="PANTHER" id="PTHR43378:SF2">
    <property type="entry name" value="UDP-3-O-ACYLGLUCOSAMINE N-ACYLTRANSFERASE 1, MITOCHONDRIAL-RELATED"/>
    <property type="match status" value="1"/>
</dbReference>
<dbReference type="Pfam" id="PF00132">
    <property type="entry name" value="Hexapep"/>
    <property type="match status" value="2"/>
</dbReference>
<dbReference type="Pfam" id="PF04613">
    <property type="entry name" value="LpxD"/>
    <property type="match status" value="1"/>
</dbReference>
<dbReference type="SUPFAM" id="SSF51161">
    <property type="entry name" value="Trimeric LpxA-like enzymes"/>
    <property type="match status" value="1"/>
</dbReference>
<dbReference type="PROSITE" id="PS00101">
    <property type="entry name" value="HEXAPEP_TRANSFERASES"/>
    <property type="match status" value="1"/>
</dbReference>
<evidence type="ECO:0000255" key="1">
    <source>
        <dbReference type="HAMAP-Rule" id="MF_00523"/>
    </source>
</evidence>
<organism>
    <name type="scientific">Brucella suis (strain ATCC 23445 / NCTC 10510)</name>
    <dbReference type="NCBI Taxonomy" id="470137"/>
    <lineage>
        <taxon>Bacteria</taxon>
        <taxon>Pseudomonadati</taxon>
        <taxon>Pseudomonadota</taxon>
        <taxon>Alphaproteobacteria</taxon>
        <taxon>Hyphomicrobiales</taxon>
        <taxon>Brucellaceae</taxon>
        <taxon>Brucella/Ochrobactrum group</taxon>
        <taxon>Brucella</taxon>
    </lineage>
</organism>
<reference key="1">
    <citation type="submission" date="2007-12" db="EMBL/GenBank/DDBJ databases">
        <title>Brucella suis ATCC 23445 whole genome shotgun sequencing project.</title>
        <authorList>
            <person name="Setubal J.C."/>
            <person name="Bowns C."/>
            <person name="Boyle S."/>
            <person name="Crasta O.R."/>
            <person name="Czar M.J."/>
            <person name="Dharmanolla C."/>
            <person name="Gillespie J.J."/>
            <person name="Kenyon R.W."/>
            <person name="Lu J."/>
            <person name="Mane S."/>
            <person name="Mohapatra S."/>
            <person name="Nagrani S."/>
            <person name="Purkayastha A."/>
            <person name="Rajasimha H.K."/>
            <person name="Shallom J.M."/>
            <person name="Shallom S."/>
            <person name="Shukla M."/>
            <person name="Snyder E.E."/>
            <person name="Sobral B.W."/>
            <person name="Wattam A.R."/>
            <person name="Will R."/>
            <person name="Williams K."/>
            <person name="Yoo H."/>
            <person name="Bruce D."/>
            <person name="Detter C."/>
            <person name="Munk C."/>
            <person name="Brettin T.S."/>
        </authorList>
    </citation>
    <scope>NUCLEOTIDE SEQUENCE [LARGE SCALE GENOMIC DNA]</scope>
    <source>
        <strain>ATCC 23445 / NCTC 10510</strain>
    </source>
</reference>
<accession>B0CGV1</accession>
<protein>
    <recommendedName>
        <fullName evidence="1">UDP-3-O-acylglucosamine N-acyltransferase</fullName>
        <ecNumber evidence="1">2.3.1.191</ecNumber>
    </recommendedName>
</protein>
<name>LPXD_BRUSI</name>
<comment type="function">
    <text evidence="1">Catalyzes the N-acylation of UDP-3-O-acylglucosamine using 3-hydroxyacyl-ACP as the acyl donor. Is involved in the biosynthesis of lipid A, a phosphorylated glycolipid that anchors the lipopolysaccharide to the outer membrane of the cell.</text>
</comment>
<comment type="catalytic activity">
    <reaction evidence="1">
        <text>a UDP-3-O-[(3R)-3-hydroxyacyl]-alpha-D-glucosamine + a (3R)-hydroxyacyl-[ACP] = a UDP-2-N,3-O-bis[(3R)-3-hydroxyacyl]-alpha-D-glucosamine + holo-[ACP] + H(+)</text>
        <dbReference type="Rhea" id="RHEA:53836"/>
        <dbReference type="Rhea" id="RHEA-COMP:9685"/>
        <dbReference type="Rhea" id="RHEA-COMP:9945"/>
        <dbReference type="ChEBI" id="CHEBI:15378"/>
        <dbReference type="ChEBI" id="CHEBI:64479"/>
        <dbReference type="ChEBI" id="CHEBI:78827"/>
        <dbReference type="ChEBI" id="CHEBI:137740"/>
        <dbReference type="ChEBI" id="CHEBI:137748"/>
        <dbReference type="EC" id="2.3.1.191"/>
    </reaction>
</comment>
<comment type="pathway">
    <text evidence="1">Bacterial outer membrane biogenesis; LPS lipid A biosynthesis.</text>
</comment>
<comment type="subunit">
    <text evidence="1">Homotrimer.</text>
</comment>
<comment type="similarity">
    <text evidence="1">Belongs to the transferase hexapeptide repeat family. LpxD subfamily.</text>
</comment>
<feature type="chain" id="PRO_1000081685" description="UDP-3-O-acylglucosamine N-acyltransferase">
    <location>
        <begin position="1"/>
        <end position="351"/>
    </location>
</feature>
<feature type="active site" description="Proton acceptor" evidence="1">
    <location>
        <position position="257"/>
    </location>
</feature>